<reference key="1">
    <citation type="journal article" date="2002" name="Biochim. Biophys. Acta">
        <title>Molecular cloning and characterization of hetR genes from filamentous cyanobacteria.</title>
        <authorList>
            <person name="Schiefer W."/>
            <person name="Schuetz K."/>
            <person name="Hachtel W."/>
            <person name="Happe T."/>
        </authorList>
    </citation>
    <scope>NUCLEOTIDE SEQUENCE [GENOMIC DNA]</scope>
    <source>
        <strain>ATCC 18200 / UTEX 594 / PCC 73110</strain>
    </source>
</reference>
<reference key="2">
    <citation type="journal article" date="1998" name="FEMS Microbiol. Lett.">
        <title>The presence and expression of hetR in the non-heterocystous cyanobacterium Symploca PCC 8002.</title>
        <authorList>
            <person name="Janson S."/>
            <person name="Matveyev A."/>
            <person name="Bergman B."/>
        </authorList>
    </citation>
    <scope>NUCLEOTIDE SEQUENCE [GENOMIC DNA] OF 54-202</scope>
    <scope>DOES NOT FORM HETEROCYSTS</scope>
    <source>
        <strain>ATCC 18200 / UTEX 594 / PCC 73110</strain>
    </source>
</reference>
<reference key="3">
    <citation type="journal article" date="2000" name="Plant Physiol.">
        <title>Differential expression of photosynthesis and nitrogen fixation genes in the cyanobacterium Plectonema boryanum.</title>
        <authorList>
            <person name="Misra H.S."/>
            <person name="Tuli R."/>
        </authorList>
    </citation>
    <scope>DOES NOT FORM HETEROCYSTS</scope>
    <source>
        <strain>ATCC 18200 / UTEX 594 / PCC 73110</strain>
    </source>
</reference>
<keyword id="KW-0010">Activator</keyword>
<keyword id="KW-1015">Disulfide bond</keyword>
<keyword id="KW-0238">DNA-binding</keyword>
<keyword id="KW-0378">Hydrolase</keyword>
<keyword id="KW-0645">Protease</keyword>
<keyword id="KW-0720">Serine protease</keyword>
<keyword id="KW-0804">Transcription</keyword>
<keyword id="KW-0805">Transcription regulation</keyword>
<comment type="function">
    <text evidence="1">Might be involved in temporal and/or spatial regulation of nitrogen fixation. Dimerization is required for DNA-binding. Has both a protease and a DNA-binding activity.</text>
</comment>
<comment type="subunit">
    <text evidence="1">Homodimer; disulfide-linked.</text>
</comment>
<comment type="miscellaneous">
    <text evidence="2 5">This filamentous cyanobacterium does not make heterocysts. In anaerobic conditions under continuous light it temporally alternates between photosynthesis and nitrogen-fixing with a periodicity of about 15 hours. Transcription of a number of photosynthetic and nitrogen-fixing genes cycles alternatively with the same periodicity.</text>
</comment>
<comment type="similarity">
    <text evidence="1">Belongs to the peptidase S48 family.</text>
</comment>
<feature type="chain" id="PRO_0000208482" description="DNA-binding transcriptional activator HetR">
    <location>
        <begin position="1"/>
        <end position="299"/>
    </location>
</feature>
<feature type="active site" evidence="1">
    <location>
        <position position="152"/>
    </location>
</feature>
<feature type="disulfide bond" description="Interchain" evidence="1">
    <location>
        <position position="48"/>
    </location>
</feature>
<feature type="sequence conflict" description="In Ref. 2; AAB81944." evidence="4" ref="2">
    <original>KR</original>
    <variation>NG</variation>
    <location>
        <begin position="187"/>
        <end position="188"/>
    </location>
</feature>
<evidence type="ECO:0000255" key="1">
    <source>
        <dbReference type="HAMAP-Rule" id="MF_00781"/>
    </source>
</evidence>
<evidence type="ECO:0000269" key="2">
    <source>
    </source>
</evidence>
<evidence type="ECO:0000303" key="3">
    <source>
    </source>
</evidence>
<evidence type="ECO:0000305" key="4"/>
<evidence type="ECO:0000305" key="5">
    <source>
    </source>
</evidence>
<sequence>MTNDLDLIKLLSPSAMDQIMLYLAFSAMRTGGHRHGAFLDAAATAAKCAIYMTYLEQDGNIRMTGHLHHIEPKRVKAIVEEVRQALTEGKLLKMLGSQEPRYLIQLPYVWMEQYPWQPGRSRVPGTSLTSEEKRQIEQKLPNNLPDAQLINSFQFLELIEFLNTRSQEDLPPEQRMPLSEALAEHIKRRLLYSGTVTRIESPWGMPFYALTRASYSPEDQEERAYVMIEDTARFFRLMQDWAKREDQVMRVLEELDIPDDRVRDAIAELDEILRNWADRYHQEGGKPFVVQMVFGSTET</sequence>
<proteinExistence type="inferred from homology"/>
<accession>Q93CE8</accession>
<accession>O30610</accession>
<gene>
    <name evidence="1 3" type="primary">hetR</name>
</gene>
<organism>
    <name type="scientific">Leptolyngbya boryana</name>
    <name type="common">Plectonema boryanum</name>
    <dbReference type="NCBI Taxonomy" id="1184"/>
    <lineage>
        <taxon>Bacteria</taxon>
        <taxon>Bacillati</taxon>
        <taxon>Cyanobacteriota</taxon>
        <taxon>Cyanophyceae</taxon>
        <taxon>Leptolyngbyales</taxon>
        <taxon>Leptolyngbyaceae</taxon>
        <taxon>Leptolyngbya group</taxon>
        <taxon>Leptolyngbya</taxon>
    </lineage>
</organism>
<name>HETR_LEPBY</name>
<protein>
    <recommendedName>
        <fullName evidence="1">DNA-binding transcriptional activator HetR</fullName>
        <ecNumber evidence="1">3.4.21.-</ecNumber>
    </recommendedName>
</protein>
<dbReference type="EC" id="3.4.21.-" evidence="1"/>
<dbReference type="EMBL" id="AF410433">
    <property type="protein sequence ID" value="AAL05046.1"/>
    <property type="molecule type" value="Genomic_DNA"/>
</dbReference>
<dbReference type="EMBL" id="AF013036">
    <property type="protein sequence ID" value="AAB81944.1"/>
    <property type="molecule type" value="Genomic_DNA"/>
</dbReference>
<dbReference type="SMR" id="Q93CE8"/>
<dbReference type="MEROPS" id="S48.001"/>
<dbReference type="GO" id="GO:0003677">
    <property type="term" value="F:DNA binding"/>
    <property type="evidence" value="ECO:0007669"/>
    <property type="project" value="UniProtKB-UniRule"/>
</dbReference>
<dbReference type="GO" id="GO:0004252">
    <property type="term" value="F:serine-type endopeptidase activity"/>
    <property type="evidence" value="ECO:0007669"/>
    <property type="project" value="UniProtKB-UniRule"/>
</dbReference>
<dbReference type="GO" id="GO:0043158">
    <property type="term" value="P:heterocyst development"/>
    <property type="evidence" value="ECO:0007669"/>
    <property type="project" value="InterPro"/>
</dbReference>
<dbReference type="GO" id="GO:0006508">
    <property type="term" value="P:proteolysis"/>
    <property type="evidence" value="ECO:0007669"/>
    <property type="project" value="UniProtKB-KW"/>
</dbReference>
<dbReference type="Gene3D" id="6.10.250.2740">
    <property type="match status" value="1"/>
</dbReference>
<dbReference type="Gene3D" id="1.10.10.1670">
    <property type="entry name" value="HetR, flap domain"/>
    <property type="match status" value="1"/>
</dbReference>
<dbReference type="Gene3D" id="1.10.10.1680">
    <property type="entry name" value="HetR, N-terminal DNA-binding domain"/>
    <property type="match status" value="1"/>
</dbReference>
<dbReference type="HAMAP" id="MF_00781">
    <property type="entry name" value="HetR"/>
    <property type="match status" value="1"/>
</dbReference>
<dbReference type="InterPro" id="IPR040949">
    <property type="entry name" value="HetR_C"/>
</dbReference>
<dbReference type="InterPro" id="IPR041936">
    <property type="entry name" value="HetR_DNA-bd_N"/>
</dbReference>
<dbReference type="InterPro" id="IPR041935">
    <property type="entry name" value="HetR_flap"/>
</dbReference>
<dbReference type="InterPro" id="IPR005319">
    <property type="entry name" value="Pept_S48_HetR"/>
</dbReference>
<dbReference type="NCBIfam" id="NF009718">
    <property type="entry name" value="PRK13245.1"/>
    <property type="match status" value="1"/>
</dbReference>
<dbReference type="Pfam" id="PF18460">
    <property type="entry name" value="HetR_C"/>
    <property type="match status" value="1"/>
</dbReference>
<dbReference type="Pfam" id="PF03574">
    <property type="entry name" value="Peptidase_S48"/>
    <property type="match status" value="1"/>
</dbReference>